<sequence>MMSRETASSEITPELLLRAYACGIFPMAESVDDPTLFWVEPKLRGVIPLESFRISSRLARTVRSDSFAVTVDTAFNAVIDGCAAPQPGRDNTWINRRIRELYIALHELGHCHSVEVWQGDELVGGLYGVRLGRAFFGESMFHIARDASKVALVHLVARLIAGGFVLLDTQFVTDHLRGFGAIEIPRRRYRALLDAALEGRADFAALPLDQPVPGTDALKIIADRA</sequence>
<evidence type="ECO:0000255" key="1">
    <source>
        <dbReference type="HAMAP-Rule" id="MF_00688"/>
    </source>
</evidence>
<feature type="chain" id="PRO_0000258068" description="Leucyl/phenylalanyl-tRNA--protein transferase">
    <location>
        <begin position="1"/>
        <end position="225"/>
    </location>
</feature>
<proteinExistence type="inferred from homology"/>
<organism>
    <name type="scientific">Nitrobacter hamburgensis (strain DSM 10229 / NCIMB 13809 / X14)</name>
    <dbReference type="NCBI Taxonomy" id="323097"/>
    <lineage>
        <taxon>Bacteria</taxon>
        <taxon>Pseudomonadati</taxon>
        <taxon>Pseudomonadota</taxon>
        <taxon>Alphaproteobacteria</taxon>
        <taxon>Hyphomicrobiales</taxon>
        <taxon>Nitrobacteraceae</taxon>
        <taxon>Nitrobacter</taxon>
    </lineage>
</organism>
<keyword id="KW-0012">Acyltransferase</keyword>
<keyword id="KW-0963">Cytoplasm</keyword>
<keyword id="KW-1185">Reference proteome</keyword>
<keyword id="KW-0808">Transferase</keyword>
<gene>
    <name evidence="1" type="primary">aat</name>
    <name type="ordered locus">Nham_2193</name>
</gene>
<protein>
    <recommendedName>
        <fullName evidence="1">Leucyl/phenylalanyl-tRNA--protein transferase</fullName>
        <ecNumber evidence="1">2.3.2.6</ecNumber>
    </recommendedName>
    <alternativeName>
        <fullName evidence="1">L/F-transferase</fullName>
    </alternativeName>
    <alternativeName>
        <fullName evidence="1">Leucyltransferase</fullName>
    </alternativeName>
    <alternativeName>
        <fullName evidence="1">Phenyalanyltransferase</fullName>
    </alternativeName>
</protein>
<reference key="1">
    <citation type="submission" date="2006-03" db="EMBL/GenBank/DDBJ databases">
        <title>Complete sequence of chromosome of Nitrobacter hamburgensis X14.</title>
        <authorList>
            <consortium name="US DOE Joint Genome Institute"/>
            <person name="Copeland A."/>
            <person name="Lucas S."/>
            <person name="Lapidus A."/>
            <person name="Barry K."/>
            <person name="Detter J.C."/>
            <person name="Glavina del Rio T."/>
            <person name="Hammon N."/>
            <person name="Israni S."/>
            <person name="Dalin E."/>
            <person name="Tice H."/>
            <person name="Pitluck S."/>
            <person name="Chain P."/>
            <person name="Malfatti S."/>
            <person name="Shin M."/>
            <person name="Vergez L."/>
            <person name="Schmutz J."/>
            <person name="Larimer F."/>
            <person name="Land M."/>
            <person name="Hauser L."/>
            <person name="Kyrpides N."/>
            <person name="Ivanova N."/>
            <person name="Ward B."/>
            <person name="Arp D."/>
            <person name="Klotz M."/>
            <person name="Stein L."/>
            <person name="O'Mullan G."/>
            <person name="Starkenburg S."/>
            <person name="Sayavedra L."/>
            <person name="Poret-Peterson A.T."/>
            <person name="Gentry M.E."/>
            <person name="Bruce D."/>
            <person name="Richardson P."/>
        </authorList>
    </citation>
    <scope>NUCLEOTIDE SEQUENCE [LARGE SCALE GENOMIC DNA]</scope>
    <source>
        <strain>DSM 10229 / NCIMB 13809 / X14</strain>
    </source>
</reference>
<name>LFTR_NITHX</name>
<dbReference type="EC" id="2.3.2.6" evidence="1"/>
<dbReference type="EMBL" id="CP000319">
    <property type="protein sequence ID" value="ABE62985.1"/>
    <property type="molecule type" value="Genomic_DNA"/>
</dbReference>
<dbReference type="RefSeq" id="WP_011510662.1">
    <property type="nucleotide sequence ID" value="NC_007964.1"/>
</dbReference>
<dbReference type="SMR" id="Q1QLB2"/>
<dbReference type="STRING" id="323097.Nham_2193"/>
<dbReference type="KEGG" id="nha:Nham_2193"/>
<dbReference type="eggNOG" id="COG2360">
    <property type="taxonomic scope" value="Bacteria"/>
</dbReference>
<dbReference type="HOGENOM" id="CLU_075045_1_1_5"/>
<dbReference type="OrthoDB" id="9790282at2"/>
<dbReference type="Proteomes" id="UP000001953">
    <property type="component" value="Chromosome"/>
</dbReference>
<dbReference type="GO" id="GO:0005737">
    <property type="term" value="C:cytoplasm"/>
    <property type="evidence" value="ECO:0007669"/>
    <property type="project" value="UniProtKB-SubCell"/>
</dbReference>
<dbReference type="GO" id="GO:0008914">
    <property type="term" value="F:leucyl-tRNA--protein transferase activity"/>
    <property type="evidence" value="ECO:0007669"/>
    <property type="project" value="UniProtKB-UniRule"/>
</dbReference>
<dbReference type="GO" id="GO:0030163">
    <property type="term" value="P:protein catabolic process"/>
    <property type="evidence" value="ECO:0007669"/>
    <property type="project" value="UniProtKB-UniRule"/>
</dbReference>
<dbReference type="FunFam" id="3.40.630.70:FF:000001">
    <property type="entry name" value="Leucyl/phenylalanyl-tRNA--protein transferase"/>
    <property type="match status" value="1"/>
</dbReference>
<dbReference type="Gene3D" id="3.40.630.70">
    <property type="entry name" value="Leucyl/phenylalanyl-tRNA-protein transferase, C-terminal domain"/>
    <property type="match status" value="1"/>
</dbReference>
<dbReference type="Gene3D" id="3.30.70.3550">
    <property type="entry name" value="Leucyl/phenylalanyl-tRNA-protein transferase, N-terminal domain"/>
    <property type="match status" value="1"/>
</dbReference>
<dbReference type="HAMAP" id="MF_00688">
    <property type="entry name" value="Leu_Phe_trans"/>
    <property type="match status" value="1"/>
</dbReference>
<dbReference type="InterPro" id="IPR016181">
    <property type="entry name" value="Acyl_CoA_acyltransferase"/>
</dbReference>
<dbReference type="InterPro" id="IPR004616">
    <property type="entry name" value="Leu/Phe-tRNA_Trfase"/>
</dbReference>
<dbReference type="InterPro" id="IPR042203">
    <property type="entry name" value="Leu/Phe-tRNA_Trfase_C"/>
</dbReference>
<dbReference type="InterPro" id="IPR042221">
    <property type="entry name" value="Leu/Phe-tRNA_Trfase_N"/>
</dbReference>
<dbReference type="NCBIfam" id="TIGR00667">
    <property type="entry name" value="aat"/>
    <property type="match status" value="1"/>
</dbReference>
<dbReference type="PANTHER" id="PTHR30098">
    <property type="entry name" value="LEUCYL/PHENYLALANYL-TRNA--PROTEIN TRANSFERASE"/>
    <property type="match status" value="1"/>
</dbReference>
<dbReference type="PANTHER" id="PTHR30098:SF2">
    <property type="entry name" value="LEUCYL_PHENYLALANYL-TRNA--PROTEIN TRANSFERASE"/>
    <property type="match status" value="1"/>
</dbReference>
<dbReference type="Pfam" id="PF03588">
    <property type="entry name" value="Leu_Phe_trans"/>
    <property type="match status" value="1"/>
</dbReference>
<dbReference type="SUPFAM" id="SSF55729">
    <property type="entry name" value="Acyl-CoA N-acyltransferases (Nat)"/>
    <property type="match status" value="1"/>
</dbReference>
<accession>Q1QLB2</accession>
<comment type="function">
    <text evidence="1">Functions in the N-end rule pathway of protein degradation where it conjugates Leu, Phe and, less efficiently, Met from aminoacyl-tRNAs to the N-termini of proteins containing an N-terminal arginine or lysine.</text>
</comment>
<comment type="catalytic activity">
    <reaction evidence="1">
        <text>N-terminal L-lysyl-[protein] + L-leucyl-tRNA(Leu) = N-terminal L-leucyl-L-lysyl-[protein] + tRNA(Leu) + H(+)</text>
        <dbReference type="Rhea" id="RHEA:12340"/>
        <dbReference type="Rhea" id="RHEA-COMP:9613"/>
        <dbReference type="Rhea" id="RHEA-COMP:9622"/>
        <dbReference type="Rhea" id="RHEA-COMP:12670"/>
        <dbReference type="Rhea" id="RHEA-COMP:12671"/>
        <dbReference type="ChEBI" id="CHEBI:15378"/>
        <dbReference type="ChEBI" id="CHEBI:65249"/>
        <dbReference type="ChEBI" id="CHEBI:78442"/>
        <dbReference type="ChEBI" id="CHEBI:78494"/>
        <dbReference type="ChEBI" id="CHEBI:133043"/>
        <dbReference type="EC" id="2.3.2.6"/>
    </reaction>
</comment>
<comment type="catalytic activity">
    <reaction evidence="1">
        <text>N-terminal L-arginyl-[protein] + L-leucyl-tRNA(Leu) = N-terminal L-leucyl-L-arginyl-[protein] + tRNA(Leu) + H(+)</text>
        <dbReference type="Rhea" id="RHEA:50416"/>
        <dbReference type="Rhea" id="RHEA-COMP:9613"/>
        <dbReference type="Rhea" id="RHEA-COMP:9622"/>
        <dbReference type="Rhea" id="RHEA-COMP:12672"/>
        <dbReference type="Rhea" id="RHEA-COMP:12673"/>
        <dbReference type="ChEBI" id="CHEBI:15378"/>
        <dbReference type="ChEBI" id="CHEBI:64719"/>
        <dbReference type="ChEBI" id="CHEBI:78442"/>
        <dbReference type="ChEBI" id="CHEBI:78494"/>
        <dbReference type="ChEBI" id="CHEBI:133044"/>
        <dbReference type="EC" id="2.3.2.6"/>
    </reaction>
</comment>
<comment type="catalytic activity">
    <reaction evidence="1">
        <text>L-phenylalanyl-tRNA(Phe) + an N-terminal L-alpha-aminoacyl-[protein] = an N-terminal L-phenylalanyl-L-alpha-aminoacyl-[protein] + tRNA(Phe)</text>
        <dbReference type="Rhea" id="RHEA:43632"/>
        <dbReference type="Rhea" id="RHEA-COMP:9668"/>
        <dbReference type="Rhea" id="RHEA-COMP:9699"/>
        <dbReference type="Rhea" id="RHEA-COMP:10636"/>
        <dbReference type="Rhea" id="RHEA-COMP:10637"/>
        <dbReference type="ChEBI" id="CHEBI:78442"/>
        <dbReference type="ChEBI" id="CHEBI:78531"/>
        <dbReference type="ChEBI" id="CHEBI:78597"/>
        <dbReference type="ChEBI" id="CHEBI:83561"/>
        <dbReference type="EC" id="2.3.2.6"/>
    </reaction>
</comment>
<comment type="subcellular location">
    <subcellularLocation>
        <location evidence="1">Cytoplasm</location>
    </subcellularLocation>
</comment>
<comment type="similarity">
    <text evidence="1">Belongs to the L/F-transferase family.</text>
</comment>